<proteinExistence type="evidence at transcript level"/>
<reference key="1">
    <citation type="journal article" date="2000" name="Nature">
        <title>Sequence and analysis of chromosome 3 of the plant Arabidopsis thaliana.</title>
        <authorList>
            <person name="Salanoubat M."/>
            <person name="Lemcke K."/>
            <person name="Rieger M."/>
            <person name="Ansorge W."/>
            <person name="Unseld M."/>
            <person name="Fartmann B."/>
            <person name="Valle G."/>
            <person name="Bloecker H."/>
            <person name="Perez-Alonso M."/>
            <person name="Obermaier B."/>
            <person name="Delseny M."/>
            <person name="Boutry M."/>
            <person name="Grivell L.A."/>
            <person name="Mache R."/>
            <person name="Puigdomenech P."/>
            <person name="De Simone V."/>
            <person name="Choisne N."/>
            <person name="Artiguenave F."/>
            <person name="Robert C."/>
            <person name="Brottier P."/>
            <person name="Wincker P."/>
            <person name="Cattolico L."/>
            <person name="Weissenbach J."/>
            <person name="Saurin W."/>
            <person name="Quetier F."/>
            <person name="Schaefer M."/>
            <person name="Mueller-Auer S."/>
            <person name="Gabel C."/>
            <person name="Fuchs M."/>
            <person name="Benes V."/>
            <person name="Wurmbach E."/>
            <person name="Drzonek H."/>
            <person name="Erfle H."/>
            <person name="Jordan N."/>
            <person name="Bangert S."/>
            <person name="Wiedelmann R."/>
            <person name="Kranz H."/>
            <person name="Voss H."/>
            <person name="Holland R."/>
            <person name="Brandt P."/>
            <person name="Nyakatura G."/>
            <person name="Vezzi A."/>
            <person name="D'Angelo M."/>
            <person name="Pallavicini A."/>
            <person name="Toppo S."/>
            <person name="Simionati B."/>
            <person name="Conrad A."/>
            <person name="Hornischer K."/>
            <person name="Kauer G."/>
            <person name="Loehnert T.-H."/>
            <person name="Nordsiek G."/>
            <person name="Reichelt J."/>
            <person name="Scharfe M."/>
            <person name="Schoen O."/>
            <person name="Bargues M."/>
            <person name="Terol J."/>
            <person name="Climent J."/>
            <person name="Navarro P."/>
            <person name="Collado C."/>
            <person name="Perez-Perez A."/>
            <person name="Ottenwaelder B."/>
            <person name="Duchemin D."/>
            <person name="Cooke R."/>
            <person name="Laudie M."/>
            <person name="Berger-Llauro C."/>
            <person name="Purnelle B."/>
            <person name="Masuy D."/>
            <person name="de Haan M."/>
            <person name="Maarse A.C."/>
            <person name="Alcaraz J.-P."/>
            <person name="Cottet A."/>
            <person name="Casacuberta E."/>
            <person name="Monfort A."/>
            <person name="Argiriou A."/>
            <person name="Flores M."/>
            <person name="Liguori R."/>
            <person name="Vitale D."/>
            <person name="Mannhaupt G."/>
            <person name="Haase D."/>
            <person name="Schoof H."/>
            <person name="Rudd S."/>
            <person name="Zaccaria P."/>
            <person name="Mewes H.-W."/>
            <person name="Mayer K.F.X."/>
            <person name="Kaul S."/>
            <person name="Town C.D."/>
            <person name="Koo H.L."/>
            <person name="Tallon L.J."/>
            <person name="Jenkins J."/>
            <person name="Rooney T."/>
            <person name="Rizzo M."/>
            <person name="Walts A."/>
            <person name="Utterback T."/>
            <person name="Fujii C.Y."/>
            <person name="Shea T.P."/>
            <person name="Creasy T.H."/>
            <person name="Haas B."/>
            <person name="Maiti R."/>
            <person name="Wu D."/>
            <person name="Peterson J."/>
            <person name="Van Aken S."/>
            <person name="Pai G."/>
            <person name="Militscher J."/>
            <person name="Sellers P."/>
            <person name="Gill J.E."/>
            <person name="Feldblyum T.V."/>
            <person name="Preuss D."/>
            <person name="Lin X."/>
            <person name="Nierman W.C."/>
            <person name="Salzberg S.L."/>
            <person name="White O."/>
            <person name="Venter J.C."/>
            <person name="Fraser C.M."/>
            <person name="Kaneko T."/>
            <person name="Nakamura Y."/>
            <person name="Sato S."/>
            <person name="Kato T."/>
            <person name="Asamizu E."/>
            <person name="Sasamoto S."/>
            <person name="Kimura T."/>
            <person name="Idesawa K."/>
            <person name="Kawashima K."/>
            <person name="Kishida Y."/>
            <person name="Kiyokawa C."/>
            <person name="Kohara M."/>
            <person name="Matsumoto M."/>
            <person name="Matsuno A."/>
            <person name="Muraki A."/>
            <person name="Nakayama S."/>
            <person name="Nakazaki N."/>
            <person name="Shinpo S."/>
            <person name="Takeuchi C."/>
            <person name="Wada T."/>
            <person name="Watanabe A."/>
            <person name="Yamada M."/>
            <person name="Yasuda M."/>
            <person name="Tabata S."/>
        </authorList>
    </citation>
    <scope>NUCLEOTIDE SEQUENCE [LARGE SCALE GENOMIC DNA]</scope>
    <source>
        <strain>cv. Columbia</strain>
    </source>
</reference>
<reference key="2">
    <citation type="journal article" date="2017" name="Plant J.">
        <title>Araport11: a complete reannotation of the Arabidopsis thaliana reference genome.</title>
        <authorList>
            <person name="Cheng C.Y."/>
            <person name="Krishnakumar V."/>
            <person name="Chan A.P."/>
            <person name="Thibaud-Nissen F."/>
            <person name="Schobel S."/>
            <person name="Town C.D."/>
        </authorList>
    </citation>
    <scope>GENOME REANNOTATION</scope>
    <source>
        <strain>cv. Columbia</strain>
    </source>
</reference>
<reference key="3">
    <citation type="journal article" date="2003" name="Science">
        <title>Empirical analysis of transcriptional activity in the Arabidopsis genome.</title>
        <authorList>
            <person name="Yamada K."/>
            <person name="Lim J."/>
            <person name="Dale J.M."/>
            <person name="Chen H."/>
            <person name="Shinn P."/>
            <person name="Palm C.J."/>
            <person name="Southwick A.M."/>
            <person name="Wu H.C."/>
            <person name="Kim C.J."/>
            <person name="Nguyen M."/>
            <person name="Pham P.K."/>
            <person name="Cheuk R.F."/>
            <person name="Karlin-Newmann G."/>
            <person name="Liu S.X."/>
            <person name="Lam B."/>
            <person name="Sakano H."/>
            <person name="Wu T."/>
            <person name="Yu G."/>
            <person name="Miranda M."/>
            <person name="Quach H.L."/>
            <person name="Tripp M."/>
            <person name="Chang C.H."/>
            <person name="Lee J.M."/>
            <person name="Toriumi M.J."/>
            <person name="Chan M.M."/>
            <person name="Tang C.C."/>
            <person name="Onodera C.S."/>
            <person name="Deng J.M."/>
            <person name="Akiyama K."/>
            <person name="Ansari Y."/>
            <person name="Arakawa T."/>
            <person name="Banh J."/>
            <person name="Banno F."/>
            <person name="Bowser L."/>
            <person name="Brooks S.Y."/>
            <person name="Carninci P."/>
            <person name="Chao Q."/>
            <person name="Choy N."/>
            <person name="Enju A."/>
            <person name="Goldsmith A.D."/>
            <person name="Gurjal M."/>
            <person name="Hansen N.F."/>
            <person name="Hayashizaki Y."/>
            <person name="Johnson-Hopson C."/>
            <person name="Hsuan V.W."/>
            <person name="Iida K."/>
            <person name="Karnes M."/>
            <person name="Khan S."/>
            <person name="Koesema E."/>
            <person name="Ishida J."/>
            <person name="Jiang P.X."/>
            <person name="Jones T."/>
            <person name="Kawai J."/>
            <person name="Kamiya A."/>
            <person name="Meyers C."/>
            <person name="Nakajima M."/>
            <person name="Narusaka M."/>
            <person name="Seki M."/>
            <person name="Sakurai T."/>
            <person name="Satou M."/>
            <person name="Tamse R."/>
            <person name="Vaysberg M."/>
            <person name="Wallender E.K."/>
            <person name="Wong C."/>
            <person name="Yamamura Y."/>
            <person name="Yuan S."/>
            <person name="Shinozaki K."/>
            <person name="Davis R.W."/>
            <person name="Theologis A."/>
            <person name="Ecker J.R."/>
        </authorList>
    </citation>
    <scope>NUCLEOTIDE SEQUENCE [LARGE SCALE MRNA]</scope>
    <source>
        <strain>cv. Columbia</strain>
    </source>
</reference>
<reference key="4">
    <citation type="submission" date="2004-06" db="EMBL/GenBank/DDBJ databases">
        <title>Arabidopsis ORF clones.</title>
        <authorList>
            <person name="Cheuk R."/>
            <person name="Chen H."/>
            <person name="Kim C.J."/>
            <person name="Shinn P."/>
            <person name="Ecker J.R."/>
        </authorList>
    </citation>
    <scope>NUCLEOTIDE SEQUENCE [LARGE SCALE MRNA]</scope>
</reference>
<reference key="5">
    <citation type="journal article" date="2005" name="RNA">
        <title>Evolutionary conservation of minor U12-type spliceosome between plants and humans.</title>
        <authorList>
            <person name="Lorkovic Z.J."/>
            <person name="Lehner R."/>
            <person name="Forstner C."/>
            <person name="Barta A."/>
        </authorList>
    </citation>
    <scope>IDENTIFICATION</scope>
</reference>
<comment type="subunit">
    <text evidence="1">Component of the U11/U12 snRNPs that are part of the U12-type spliceosome.</text>
</comment>
<comment type="subcellular location">
    <subcellularLocation>
        <location evidence="1">Nucleus</location>
    </subcellularLocation>
</comment>
<comment type="sequence caution" evidence="3">
    <conflict type="erroneous gene model prediction">
        <sequence resource="EMBL-CDS" id="AAF21196"/>
    </conflict>
</comment>
<feature type="chain" id="PRO_0000429833" description="U11/U12 small nuclear ribonucleoprotein 25 kDa protein">
    <location>
        <begin position="1"/>
        <end position="165"/>
    </location>
</feature>
<feature type="domain" description="Ubiquitin-like">
    <location>
        <begin position="52"/>
        <end position="137"/>
    </location>
</feature>
<feature type="region of interest" description="Disordered" evidence="2">
    <location>
        <begin position="145"/>
        <end position="165"/>
    </location>
</feature>
<organism>
    <name type="scientific">Arabidopsis thaliana</name>
    <name type="common">Mouse-ear cress</name>
    <dbReference type="NCBI Taxonomy" id="3702"/>
    <lineage>
        <taxon>Eukaryota</taxon>
        <taxon>Viridiplantae</taxon>
        <taxon>Streptophyta</taxon>
        <taxon>Embryophyta</taxon>
        <taxon>Tracheophyta</taxon>
        <taxon>Spermatophyta</taxon>
        <taxon>Magnoliopsida</taxon>
        <taxon>eudicotyledons</taxon>
        <taxon>Gunneridae</taxon>
        <taxon>Pentapetalae</taxon>
        <taxon>rosids</taxon>
        <taxon>malvids</taxon>
        <taxon>Brassicales</taxon>
        <taxon>Brassicaceae</taxon>
        <taxon>Camelineae</taxon>
        <taxon>Arabidopsis</taxon>
    </lineage>
</organism>
<name>U1125_ARATH</name>
<evidence type="ECO:0000250" key="1"/>
<evidence type="ECO:0000256" key="2">
    <source>
        <dbReference type="SAM" id="MobiDB-lite"/>
    </source>
</evidence>
<evidence type="ECO:0000305" key="3"/>
<protein>
    <recommendedName>
        <fullName>U11/U12 small nuclear ribonucleoprotein 25 kDa protein</fullName>
        <shortName>U11/U12 snRNP 25 kDa protein</shortName>
        <shortName>U11/U12-25K</shortName>
    </recommendedName>
</protein>
<dbReference type="EMBL" id="AC013483">
    <property type="protein sequence ID" value="AAF21196.1"/>
    <property type="status" value="ALT_SEQ"/>
    <property type="molecule type" value="Genomic_DNA"/>
</dbReference>
<dbReference type="EMBL" id="CP002686">
    <property type="protein sequence ID" value="AEE74612.1"/>
    <property type="molecule type" value="Genomic_DNA"/>
</dbReference>
<dbReference type="EMBL" id="CP002686">
    <property type="protein sequence ID" value="ANM63464.1"/>
    <property type="molecule type" value="Genomic_DNA"/>
</dbReference>
<dbReference type="EMBL" id="BT002826">
    <property type="protein sequence ID" value="AAO22645.1"/>
    <property type="molecule type" value="mRNA"/>
</dbReference>
<dbReference type="EMBL" id="BT014863">
    <property type="protein sequence ID" value="AAT41846.1"/>
    <property type="molecule type" value="mRNA"/>
</dbReference>
<dbReference type="RefSeq" id="NP_001325550.1">
    <property type="nucleotide sequence ID" value="NM_001337747.1"/>
</dbReference>
<dbReference type="RefSeq" id="NP_187443.2">
    <property type="nucleotide sequence ID" value="NM_111665.3"/>
</dbReference>
<dbReference type="SMR" id="Q84WS8"/>
<dbReference type="FunCoup" id="Q84WS8">
    <property type="interactions" value="1698"/>
</dbReference>
<dbReference type="STRING" id="3702.Q84WS8"/>
<dbReference type="PaxDb" id="3702-AT3G07860.1"/>
<dbReference type="ProteomicsDB" id="242604"/>
<dbReference type="EnsemblPlants" id="AT3G07860.1">
    <property type="protein sequence ID" value="AT3G07860.1"/>
    <property type="gene ID" value="AT3G07860"/>
</dbReference>
<dbReference type="EnsemblPlants" id="AT3G07860.3">
    <property type="protein sequence ID" value="AT3G07860.3"/>
    <property type="gene ID" value="AT3G07860"/>
</dbReference>
<dbReference type="GeneID" id="819977"/>
<dbReference type="Gramene" id="AT3G07860.1">
    <property type="protein sequence ID" value="AT3G07860.1"/>
    <property type="gene ID" value="AT3G07860"/>
</dbReference>
<dbReference type="Gramene" id="AT3G07860.3">
    <property type="protein sequence ID" value="AT3G07860.3"/>
    <property type="gene ID" value="AT3G07860"/>
</dbReference>
<dbReference type="KEGG" id="ath:AT3G07860"/>
<dbReference type="Araport" id="AT3G07860"/>
<dbReference type="TAIR" id="AT3G07860"/>
<dbReference type="eggNOG" id="ENOG502RXSI">
    <property type="taxonomic scope" value="Eukaryota"/>
</dbReference>
<dbReference type="HOGENOM" id="CLU_094998_2_0_1"/>
<dbReference type="InParanoid" id="Q84WS8"/>
<dbReference type="OMA" id="KHVWANF"/>
<dbReference type="OrthoDB" id="72819at2759"/>
<dbReference type="PhylomeDB" id="Q84WS8"/>
<dbReference type="PRO" id="PR:Q84WS8"/>
<dbReference type="Proteomes" id="UP000006548">
    <property type="component" value="Chromosome 3"/>
</dbReference>
<dbReference type="ExpressionAtlas" id="Q84WS8">
    <property type="expression patterns" value="baseline and differential"/>
</dbReference>
<dbReference type="GO" id="GO:0005681">
    <property type="term" value="C:spliceosomal complex"/>
    <property type="evidence" value="ECO:0007669"/>
    <property type="project" value="UniProtKB-KW"/>
</dbReference>
<dbReference type="GO" id="GO:0000398">
    <property type="term" value="P:mRNA splicing, via spliceosome"/>
    <property type="evidence" value="ECO:0007669"/>
    <property type="project" value="InterPro"/>
</dbReference>
<dbReference type="CDD" id="cd17058">
    <property type="entry name" value="Ubl_SNRNP25"/>
    <property type="match status" value="1"/>
</dbReference>
<dbReference type="Gene3D" id="3.10.20.90">
    <property type="entry name" value="Phosphatidylinositol 3-kinase Catalytic Subunit, Chain A, domain 1"/>
    <property type="match status" value="1"/>
</dbReference>
<dbReference type="InterPro" id="IPR039690">
    <property type="entry name" value="SNRNP25"/>
</dbReference>
<dbReference type="InterPro" id="IPR040610">
    <property type="entry name" value="SNRNP25_ubiquitin"/>
</dbReference>
<dbReference type="InterPro" id="IPR029071">
    <property type="entry name" value="Ubiquitin-like_domsf"/>
</dbReference>
<dbReference type="PANTHER" id="PTHR14942">
    <property type="entry name" value="U11/U12 SMALL NUCLEAR RIBONUCLEOPROTEIN 25 KDA PROTEIN"/>
    <property type="match status" value="1"/>
</dbReference>
<dbReference type="PANTHER" id="PTHR14942:SF0">
    <property type="entry name" value="U11_U12 SMALL NUCLEAR RIBONUCLEOPROTEIN 25 KDA PROTEIN"/>
    <property type="match status" value="1"/>
</dbReference>
<dbReference type="Pfam" id="PF18036">
    <property type="entry name" value="Ubiquitin_4"/>
    <property type="match status" value="1"/>
</dbReference>
<dbReference type="SUPFAM" id="SSF54236">
    <property type="entry name" value="Ubiquitin-like"/>
    <property type="match status" value="1"/>
</dbReference>
<sequence>MESGDYDVETKREKLKSVLSQLLADPILADVPRNPTLSDVVTLVSLEKGSAMRLSVVKLDGSSLDVAVMNSATLKDLKLLIKKKVNEMEQANMGHRHISWKHVWSNFCLSCNNEKLLDDNAVLQDVGIRNNSQVTFMPYVMKKGRGRHSKRKKHRLFRSLHKTSS</sequence>
<gene>
    <name type="primary">SNRNP25</name>
    <name type="ordered locus">At3g07860</name>
    <name type="ORF">F17A17.20</name>
</gene>
<keyword id="KW-0507">mRNA processing</keyword>
<keyword id="KW-0508">mRNA splicing</keyword>
<keyword id="KW-0539">Nucleus</keyword>
<keyword id="KW-1185">Reference proteome</keyword>
<keyword id="KW-0687">Ribonucleoprotein</keyword>
<keyword id="KW-0747">Spliceosome</keyword>
<accession>Q84WS8</accession>
<accession>Q9SFC8</accession>